<reference key="1">
    <citation type="journal article" date="2005" name="Nature">
        <title>The genome of the social amoeba Dictyostelium discoideum.</title>
        <authorList>
            <person name="Eichinger L."/>
            <person name="Pachebat J.A."/>
            <person name="Gloeckner G."/>
            <person name="Rajandream M.A."/>
            <person name="Sucgang R."/>
            <person name="Berriman M."/>
            <person name="Song J."/>
            <person name="Olsen R."/>
            <person name="Szafranski K."/>
            <person name="Xu Q."/>
            <person name="Tunggal B."/>
            <person name="Kummerfeld S."/>
            <person name="Madera M."/>
            <person name="Konfortov B.A."/>
            <person name="Rivero F."/>
            <person name="Bankier A.T."/>
            <person name="Lehmann R."/>
            <person name="Hamlin N."/>
            <person name="Davies R."/>
            <person name="Gaudet P."/>
            <person name="Fey P."/>
            <person name="Pilcher K."/>
            <person name="Chen G."/>
            <person name="Saunders D."/>
            <person name="Sodergren E.J."/>
            <person name="Davis P."/>
            <person name="Kerhornou A."/>
            <person name="Nie X."/>
            <person name="Hall N."/>
            <person name="Anjard C."/>
            <person name="Hemphill L."/>
            <person name="Bason N."/>
            <person name="Farbrother P."/>
            <person name="Desany B."/>
            <person name="Just E."/>
            <person name="Morio T."/>
            <person name="Rost R."/>
            <person name="Churcher C.M."/>
            <person name="Cooper J."/>
            <person name="Haydock S."/>
            <person name="van Driessche N."/>
            <person name="Cronin A."/>
            <person name="Goodhead I."/>
            <person name="Muzny D.M."/>
            <person name="Mourier T."/>
            <person name="Pain A."/>
            <person name="Lu M."/>
            <person name="Harper D."/>
            <person name="Lindsay R."/>
            <person name="Hauser H."/>
            <person name="James K.D."/>
            <person name="Quiles M."/>
            <person name="Madan Babu M."/>
            <person name="Saito T."/>
            <person name="Buchrieser C."/>
            <person name="Wardroper A."/>
            <person name="Felder M."/>
            <person name="Thangavelu M."/>
            <person name="Johnson D."/>
            <person name="Knights A."/>
            <person name="Loulseged H."/>
            <person name="Mungall K.L."/>
            <person name="Oliver K."/>
            <person name="Price C."/>
            <person name="Quail M.A."/>
            <person name="Urushihara H."/>
            <person name="Hernandez J."/>
            <person name="Rabbinowitsch E."/>
            <person name="Steffen D."/>
            <person name="Sanders M."/>
            <person name="Ma J."/>
            <person name="Kohara Y."/>
            <person name="Sharp S."/>
            <person name="Simmonds M.N."/>
            <person name="Spiegler S."/>
            <person name="Tivey A."/>
            <person name="Sugano S."/>
            <person name="White B."/>
            <person name="Walker D."/>
            <person name="Woodward J.R."/>
            <person name="Winckler T."/>
            <person name="Tanaka Y."/>
            <person name="Shaulsky G."/>
            <person name="Schleicher M."/>
            <person name="Weinstock G.M."/>
            <person name="Rosenthal A."/>
            <person name="Cox E.C."/>
            <person name="Chisholm R.L."/>
            <person name="Gibbs R.A."/>
            <person name="Loomis W.F."/>
            <person name="Platzer M."/>
            <person name="Kay R.R."/>
            <person name="Williams J.G."/>
            <person name="Dear P.H."/>
            <person name="Noegel A.A."/>
            <person name="Barrell B.G."/>
            <person name="Kuspa A."/>
        </authorList>
    </citation>
    <scope>NUCLEOTIDE SEQUENCE [LARGE SCALE GENOMIC DNA]</scope>
    <source>
        <strain>AX4</strain>
    </source>
</reference>
<sequence length="174" mass="19498">MGCVVSKSDDIKNENESRQRNQASSSQQPSSSQTPSKQIGIAAKDSEEQPQEVSYSQMRELDNDFFKDIIDRTAQKFIDVSMVGPDGKDSFLDREKDYSAQIKDSKLLKPTSLTSLPRLSQQCQMSNLQNLLSQPTTFDNELMSKYTSSISENLNGIHIKECGELVVFFGNSLK</sequence>
<dbReference type="EMBL" id="AAFI02000187">
    <property type="protein sequence ID" value="EAS66814.1"/>
    <property type="molecule type" value="Genomic_DNA"/>
</dbReference>
<dbReference type="RefSeq" id="XP_001134497.1">
    <property type="nucleotide sequence ID" value="XM_001134497.1"/>
</dbReference>
<dbReference type="FunCoup" id="Q1ZXA8">
    <property type="interactions" value="2"/>
</dbReference>
<dbReference type="STRING" id="44689.Q1ZXA8"/>
<dbReference type="PaxDb" id="44689-DDB0231625"/>
<dbReference type="EnsemblProtists" id="EAS66814">
    <property type="protein sequence ID" value="EAS66814"/>
    <property type="gene ID" value="DDB_G0292160"/>
</dbReference>
<dbReference type="GeneID" id="8628540"/>
<dbReference type="KEGG" id="ddi:DDB_G0292160"/>
<dbReference type="dictyBase" id="DDB_G0292160"/>
<dbReference type="VEuPathDB" id="AmoebaDB:DDB_G0292160"/>
<dbReference type="eggNOG" id="ENOG502RG27">
    <property type="taxonomic scope" value="Eukaryota"/>
</dbReference>
<dbReference type="HOGENOM" id="CLU_1542888_0_0_1"/>
<dbReference type="InParanoid" id="Q1ZXA8"/>
<dbReference type="OMA" id="MREMDND"/>
<dbReference type="Reactome" id="R-DDI-1632852">
    <property type="pathway name" value="Macroautophagy"/>
</dbReference>
<dbReference type="Reactome" id="R-DDI-165159">
    <property type="pathway name" value="MTOR signalling"/>
</dbReference>
<dbReference type="Reactome" id="R-DDI-166208">
    <property type="pathway name" value="mTORC1-mediated signalling"/>
</dbReference>
<dbReference type="Reactome" id="R-DDI-380972">
    <property type="pathway name" value="Energy dependent regulation of mTOR by LKB1-AMPK"/>
</dbReference>
<dbReference type="Reactome" id="R-DDI-5628897">
    <property type="pathway name" value="TP53 Regulates Metabolic Genes"/>
</dbReference>
<dbReference type="Reactome" id="R-DDI-6798695">
    <property type="pathway name" value="Neutrophil degranulation"/>
</dbReference>
<dbReference type="Reactome" id="R-DDI-8943724">
    <property type="pathway name" value="Regulation of PTEN gene transcription"/>
</dbReference>
<dbReference type="Reactome" id="R-DDI-9013149">
    <property type="pathway name" value="RAC1 GTPase cycle"/>
</dbReference>
<dbReference type="Reactome" id="R-DDI-9013404">
    <property type="pathway name" value="RAC2 GTPase cycle"/>
</dbReference>
<dbReference type="Reactome" id="R-DDI-9013406">
    <property type="pathway name" value="RHOQ GTPase cycle"/>
</dbReference>
<dbReference type="Reactome" id="R-DDI-9013407">
    <property type="pathway name" value="RHOH GTPase cycle"/>
</dbReference>
<dbReference type="Reactome" id="R-DDI-9013408">
    <property type="pathway name" value="RHOG GTPase cycle"/>
</dbReference>
<dbReference type="Reactome" id="R-DDI-9013423">
    <property type="pathway name" value="RAC3 GTPase cycle"/>
</dbReference>
<dbReference type="Reactome" id="R-DDI-9639288">
    <property type="pathway name" value="Amino acids regulate mTORC1"/>
</dbReference>
<dbReference type="PRO" id="PR:Q1ZXA8"/>
<dbReference type="Proteomes" id="UP000002195">
    <property type="component" value="Chromosome 6"/>
</dbReference>
<dbReference type="GO" id="GO:0005776">
    <property type="term" value="C:autophagosome"/>
    <property type="evidence" value="ECO:0000314"/>
    <property type="project" value="dictyBase"/>
</dbReference>
<dbReference type="GO" id="GO:0005811">
    <property type="term" value="C:lipid droplet"/>
    <property type="evidence" value="ECO:0007005"/>
    <property type="project" value="dictyBase"/>
</dbReference>
<dbReference type="GO" id="GO:0071986">
    <property type="term" value="C:Ragulator complex"/>
    <property type="evidence" value="ECO:0000318"/>
    <property type="project" value="GO_Central"/>
</dbReference>
<dbReference type="GO" id="GO:0071230">
    <property type="term" value="P:cellular response to amino acid stimulus"/>
    <property type="evidence" value="ECO:0000318"/>
    <property type="project" value="GO_Central"/>
</dbReference>
<dbReference type="GO" id="GO:0043410">
    <property type="term" value="P:positive regulation of MAPK cascade"/>
    <property type="evidence" value="ECO:0000318"/>
    <property type="project" value="GO_Central"/>
</dbReference>
<dbReference type="GO" id="GO:0001919">
    <property type="term" value="P:regulation of receptor recycling"/>
    <property type="evidence" value="ECO:0000318"/>
    <property type="project" value="GO_Central"/>
</dbReference>
<dbReference type="PANTHER" id="PTHR13401">
    <property type="entry name" value="RAGULATOR COMPLEX PROTEIN LAMTOR1"/>
    <property type="match status" value="1"/>
</dbReference>
<dbReference type="PANTHER" id="PTHR13401:SF2">
    <property type="entry name" value="RAGULATOR COMPLEX PROTEIN LAMTOR1"/>
    <property type="match status" value="1"/>
</dbReference>
<accession>Q1ZXA8</accession>
<feature type="initiator methionine" description="Removed" evidence="1">
    <location>
        <position position="1"/>
    </location>
</feature>
<feature type="chain" id="PRO_0000343909" description="Uncharacterized protein DDB_G0292160">
    <location>
        <begin position="2"/>
        <end position="174"/>
    </location>
</feature>
<feature type="region of interest" description="Disordered" evidence="2">
    <location>
        <begin position="1"/>
        <end position="55"/>
    </location>
</feature>
<feature type="compositionally biased region" description="Basic and acidic residues" evidence="2">
    <location>
        <begin position="7"/>
        <end position="19"/>
    </location>
</feature>
<feature type="compositionally biased region" description="Low complexity" evidence="2">
    <location>
        <begin position="20"/>
        <end position="38"/>
    </location>
</feature>
<feature type="lipid moiety-binding region" description="N-myristoyl glycine" evidence="1">
    <location>
        <position position="2"/>
    </location>
</feature>
<gene>
    <name type="ORF">DDB_G0292160</name>
</gene>
<evidence type="ECO:0000255" key="1"/>
<evidence type="ECO:0000256" key="2">
    <source>
        <dbReference type="SAM" id="MobiDB-lite"/>
    </source>
</evidence>
<organism>
    <name type="scientific">Dictyostelium discoideum</name>
    <name type="common">Social amoeba</name>
    <dbReference type="NCBI Taxonomy" id="44689"/>
    <lineage>
        <taxon>Eukaryota</taxon>
        <taxon>Amoebozoa</taxon>
        <taxon>Evosea</taxon>
        <taxon>Eumycetozoa</taxon>
        <taxon>Dictyostelia</taxon>
        <taxon>Dictyosteliales</taxon>
        <taxon>Dictyosteliaceae</taxon>
        <taxon>Dictyostelium</taxon>
    </lineage>
</organism>
<name>Y1625_DICDI</name>
<keyword id="KW-0449">Lipoprotein</keyword>
<keyword id="KW-0519">Myristate</keyword>
<keyword id="KW-1185">Reference proteome</keyword>
<proteinExistence type="inferred from homology"/>
<protein>
    <recommendedName>
        <fullName>Uncharacterized protein DDB_G0292160</fullName>
    </recommendedName>
</protein>